<protein>
    <recommendedName>
        <fullName evidence="12">Branched-chain-amino-acid aminotransferase, mitochondrial</fullName>
        <shortName evidence="12">BCAT(m)</shortName>
        <ecNumber evidence="8">2.6.1.42</ecNumber>
    </recommendedName>
    <alternativeName>
        <fullName evidence="10">Placental protein 18</fullName>
        <shortName evidence="10">PP18</shortName>
    </alternativeName>
</protein>
<dbReference type="EC" id="2.6.1.42" evidence="8"/>
<dbReference type="EMBL" id="U68418">
    <property type="protein sequence ID" value="AAB67672.1"/>
    <property type="molecule type" value="mRNA"/>
</dbReference>
<dbReference type="EMBL" id="AF268047">
    <property type="protein sequence ID" value="AAK38368.1"/>
    <property type="molecule type" value="mRNA"/>
</dbReference>
<dbReference type="EMBL" id="AF268048">
    <property type="protein sequence ID" value="AAK38369.1"/>
    <property type="molecule type" value="mRNA"/>
</dbReference>
<dbReference type="EMBL" id="AK314548">
    <property type="protein sequence ID" value="BAG37134.1"/>
    <property type="molecule type" value="mRNA"/>
</dbReference>
<dbReference type="EMBL" id="CH471177">
    <property type="protein sequence ID" value="EAW52403.1"/>
    <property type="molecule type" value="Genomic_DNA"/>
</dbReference>
<dbReference type="EMBL" id="BC001900">
    <property type="protein sequence ID" value="AAH01900.1"/>
    <property type="molecule type" value="mRNA"/>
</dbReference>
<dbReference type="EMBL" id="BC004243">
    <property type="protein sequence ID" value="AAH04243.2"/>
    <property type="molecule type" value="mRNA"/>
</dbReference>
<dbReference type="EMBL" id="U62739">
    <property type="protein sequence ID" value="AAB53087.1"/>
    <property type="status" value="ALT_INIT"/>
    <property type="molecule type" value="mRNA"/>
</dbReference>
<dbReference type="CCDS" id="CCDS12735.1">
    <molecule id="O15382-1"/>
</dbReference>
<dbReference type="CCDS" id="CCDS54290.1">
    <molecule id="O15382-2"/>
</dbReference>
<dbReference type="RefSeq" id="NP_001158245.1">
    <molecule id="O15382-2"/>
    <property type="nucleotide sequence ID" value="NM_001164773.2"/>
</dbReference>
<dbReference type="RefSeq" id="NP_001181.2">
    <molecule id="O15382-1"/>
    <property type="nucleotide sequence ID" value="NM_001190.4"/>
</dbReference>
<dbReference type="RefSeq" id="NP_001271254.1">
    <property type="nucleotide sequence ID" value="NM_001284325.1"/>
</dbReference>
<dbReference type="PDB" id="1EKF">
    <property type="method" value="X-ray"/>
    <property type="resolution" value="1.95 A"/>
    <property type="chains" value="A/B=28-392"/>
</dbReference>
<dbReference type="PDB" id="1EKP">
    <property type="method" value="X-ray"/>
    <property type="resolution" value="2.50 A"/>
    <property type="chains" value="A/B=28-392"/>
</dbReference>
<dbReference type="PDB" id="1EKV">
    <property type="method" value="X-ray"/>
    <property type="resolution" value="2.25 A"/>
    <property type="chains" value="A/B=28-392"/>
</dbReference>
<dbReference type="PDB" id="1KT8">
    <property type="method" value="X-ray"/>
    <property type="resolution" value="1.90 A"/>
    <property type="chains" value="A/B=28-392"/>
</dbReference>
<dbReference type="PDB" id="1KTA">
    <property type="method" value="X-ray"/>
    <property type="resolution" value="1.90 A"/>
    <property type="chains" value="A/B=28-392"/>
</dbReference>
<dbReference type="PDB" id="2A1H">
    <property type="method" value="X-ray"/>
    <property type="resolution" value="1.80 A"/>
    <property type="chains" value="A/B=28-392"/>
</dbReference>
<dbReference type="PDB" id="2HDK">
    <property type="method" value="X-ray"/>
    <property type="resolution" value="2.40 A"/>
    <property type="chains" value="A/B=28-392"/>
</dbReference>
<dbReference type="PDB" id="2HG8">
    <property type="method" value="X-ray"/>
    <property type="resolution" value="1.80 A"/>
    <property type="chains" value="A/B=28-392"/>
</dbReference>
<dbReference type="PDB" id="2HGW">
    <property type="method" value="X-ray"/>
    <property type="resolution" value="1.98 A"/>
    <property type="chains" value="A/B=28-392"/>
</dbReference>
<dbReference type="PDB" id="2HGX">
    <property type="method" value="X-ray"/>
    <property type="resolution" value="1.80 A"/>
    <property type="chains" value="A/B=28-392"/>
</dbReference>
<dbReference type="PDB" id="2HHF">
    <property type="method" value="X-ray"/>
    <property type="resolution" value="1.80 A"/>
    <property type="chains" value="A/B=28-392"/>
</dbReference>
<dbReference type="PDB" id="5BWR">
    <property type="method" value="X-ray"/>
    <property type="resolution" value="2.20 A"/>
    <property type="chains" value="A/B=28-392"/>
</dbReference>
<dbReference type="PDB" id="5BWT">
    <property type="method" value="X-ray"/>
    <property type="resolution" value="2.20 A"/>
    <property type="chains" value="A/B=28-392"/>
</dbReference>
<dbReference type="PDB" id="5BWU">
    <property type="method" value="X-ray"/>
    <property type="resolution" value="2.17 A"/>
    <property type="chains" value="A/B=28-392"/>
</dbReference>
<dbReference type="PDB" id="5BWV">
    <property type="method" value="X-ray"/>
    <property type="resolution" value="1.86 A"/>
    <property type="chains" value="A/B=28-392"/>
</dbReference>
<dbReference type="PDB" id="5BWW">
    <property type="method" value="X-ray"/>
    <property type="resolution" value="1.82 A"/>
    <property type="chains" value="A/B=28-392"/>
</dbReference>
<dbReference type="PDB" id="5BWX">
    <property type="method" value="X-ray"/>
    <property type="resolution" value="1.70 A"/>
    <property type="chains" value="A/B=28-392"/>
</dbReference>
<dbReference type="PDB" id="5CR5">
    <property type="method" value="X-ray"/>
    <property type="resolution" value="1.61 A"/>
    <property type="chains" value="A/B=28-392"/>
</dbReference>
<dbReference type="PDB" id="5HNE">
    <property type="method" value="X-ray"/>
    <property type="resolution" value="2.04 A"/>
    <property type="chains" value="A/B=28-392"/>
</dbReference>
<dbReference type="PDB" id="5I5S">
    <property type="method" value="X-ray"/>
    <property type="resolution" value="2.06 A"/>
    <property type="chains" value="A/B=28-392"/>
</dbReference>
<dbReference type="PDB" id="5I5T">
    <property type="method" value="X-ray"/>
    <property type="resolution" value="2.31 A"/>
    <property type="chains" value="A/B=28-392"/>
</dbReference>
<dbReference type="PDB" id="5I5U">
    <property type="method" value="X-ray"/>
    <property type="resolution" value="2.40 A"/>
    <property type="chains" value="A/B=28-392"/>
</dbReference>
<dbReference type="PDB" id="5I5V">
    <property type="method" value="X-ray"/>
    <property type="resolution" value="1.94 A"/>
    <property type="chains" value="A/B=28-392"/>
</dbReference>
<dbReference type="PDB" id="5I5W">
    <property type="method" value="X-ray"/>
    <property type="resolution" value="2.40 A"/>
    <property type="chains" value="A/B=28-392"/>
</dbReference>
<dbReference type="PDB" id="5I5X">
    <property type="method" value="X-ray"/>
    <property type="resolution" value="1.65 A"/>
    <property type="chains" value="A/B=28-392"/>
</dbReference>
<dbReference type="PDB" id="5I5Y">
    <property type="method" value="X-ray"/>
    <property type="resolution" value="1.81 A"/>
    <property type="chains" value="A/B=28-392"/>
</dbReference>
<dbReference type="PDB" id="5I60">
    <property type="method" value="X-ray"/>
    <property type="resolution" value="2.12 A"/>
    <property type="chains" value="A/B=28-392"/>
</dbReference>
<dbReference type="PDB" id="5MPR">
    <property type="method" value="X-ray"/>
    <property type="resolution" value="1.60 A"/>
    <property type="chains" value="A=28-392"/>
</dbReference>
<dbReference type="PDB" id="6PRX">
    <property type="method" value="X-ray"/>
    <property type="resolution" value="3.25 A"/>
    <property type="chains" value="A/B=28-392"/>
</dbReference>
<dbReference type="PDBsum" id="1EKF"/>
<dbReference type="PDBsum" id="1EKP"/>
<dbReference type="PDBsum" id="1EKV"/>
<dbReference type="PDBsum" id="1KT8"/>
<dbReference type="PDBsum" id="1KTA"/>
<dbReference type="PDBsum" id="2A1H"/>
<dbReference type="PDBsum" id="2HDK"/>
<dbReference type="PDBsum" id="2HG8"/>
<dbReference type="PDBsum" id="2HGW"/>
<dbReference type="PDBsum" id="2HGX"/>
<dbReference type="PDBsum" id="2HHF"/>
<dbReference type="PDBsum" id="5BWR"/>
<dbReference type="PDBsum" id="5BWT"/>
<dbReference type="PDBsum" id="5BWU"/>
<dbReference type="PDBsum" id="5BWV"/>
<dbReference type="PDBsum" id="5BWW"/>
<dbReference type="PDBsum" id="5BWX"/>
<dbReference type="PDBsum" id="5CR5"/>
<dbReference type="PDBsum" id="5HNE"/>
<dbReference type="PDBsum" id="5I5S"/>
<dbReference type="PDBsum" id="5I5T"/>
<dbReference type="PDBsum" id="5I5U"/>
<dbReference type="PDBsum" id="5I5V"/>
<dbReference type="PDBsum" id="5I5W"/>
<dbReference type="PDBsum" id="5I5X"/>
<dbReference type="PDBsum" id="5I5Y"/>
<dbReference type="PDBsum" id="5I60"/>
<dbReference type="PDBsum" id="5MPR"/>
<dbReference type="PDBsum" id="6PRX"/>
<dbReference type="SMR" id="O15382"/>
<dbReference type="BioGRID" id="107062">
    <property type="interactions" value="44"/>
</dbReference>
<dbReference type="FunCoup" id="O15382">
    <property type="interactions" value="1530"/>
</dbReference>
<dbReference type="IntAct" id="O15382">
    <property type="interactions" value="15"/>
</dbReference>
<dbReference type="STRING" id="9606.ENSP00000322991"/>
<dbReference type="BindingDB" id="O15382"/>
<dbReference type="ChEMBL" id="CHEMBL3616354"/>
<dbReference type="DrugBank" id="DB04074">
    <property type="generic name" value="alpha-Ketoisovalerate"/>
</dbReference>
<dbReference type="DrugBank" id="DB00142">
    <property type="generic name" value="Glutamic acid"/>
</dbReference>
<dbReference type="DrugBank" id="DB00167">
    <property type="generic name" value="Isoleucine"/>
</dbReference>
<dbReference type="DrugBank" id="DB00149">
    <property type="generic name" value="Leucine"/>
</dbReference>
<dbReference type="DrugBank" id="DB02635">
    <property type="generic name" value="N-[O-Phosphono-Pyridoxyl]-Isoleucine"/>
</dbReference>
<dbReference type="DrugBank" id="DB00114">
    <property type="generic name" value="Pyridoxal phosphate"/>
</dbReference>
<dbReference type="DrugBank" id="DB02142">
    <property type="generic name" value="Pyridoxamine-5'-Phosphate"/>
</dbReference>
<dbReference type="GuidetoPHARMACOLOGY" id="2893"/>
<dbReference type="iPTMnet" id="O15382"/>
<dbReference type="MetOSite" id="O15382"/>
<dbReference type="PhosphoSitePlus" id="O15382"/>
<dbReference type="SwissPalm" id="O15382"/>
<dbReference type="BioMuta" id="BCAT2"/>
<dbReference type="jPOST" id="O15382"/>
<dbReference type="MassIVE" id="O15382"/>
<dbReference type="PaxDb" id="9606-ENSP00000322991"/>
<dbReference type="PeptideAtlas" id="O15382"/>
<dbReference type="ProteomicsDB" id="48623">
    <molecule id="O15382-1"/>
</dbReference>
<dbReference type="ProteomicsDB" id="48624">
    <molecule id="O15382-2"/>
</dbReference>
<dbReference type="Pumba" id="O15382"/>
<dbReference type="Antibodypedia" id="31810">
    <property type="antibodies" value="260 antibodies from 31 providers"/>
</dbReference>
<dbReference type="DNASU" id="587"/>
<dbReference type="Ensembl" id="ENST00000316273.11">
    <molecule id="O15382-1"/>
    <property type="protein sequence ID" value="ENSP00000322991.5"/>
    <property type="gene ID" value="ENSG00000105552.15"/>
</dbReference>
<dbReference type="Ensembl" id="ENST00000545387.6">
    <molecule id="O15382-2"/>
    <property type="protein sequence ID" value="ENSP00000440973.1"/>
    <property type="gene ID" value="ENSG00000105552.15"/>
</dbReference>
<dbReference type="GeneID" id="587"/>
<dbReference type="KEGG" id="hsa:587"/>
<dbReference type="MANE-Select" id="ENST00000316273.11">
    <property type="protein sequence ID" value="ENSP00000322991.5"/>
    <property type="RefSeq nucleotide sequence ID" value="NM_001190.4"/>
    <property type="RefSeq protein sequence ID" value="NP_001181.2"/>
</dbReference>
<dbReference type="UCSC" id="uc002pkr.4">
    <molecule id="O15382-1"/>
    <property type="organism name" value="human"/>
</dbReference>
<dbReference type="AGR" id="HGNC:977"/>
<dbReference type="CTD" id="587"/>
<dbReference type="DisGeNET" id="587"/>
<dbReference type="GeneCards" id="BCAT2"/>
<dbReference type="HGNC" id="HGNC:977">
    <property type="gene designation" value="BCAT2"/>
</dbReference>
<dbReference type="HPA" id="ENSG00000105552">
    <property type="expression patterns" value="Tissue enhanced (choroid)"/>
</dbReference>
<dbReference type="MalaCards" id="BCAT2"/>
<dbReference type="MIM" id="113530">
    <property type="type" value="gene"/>
</dbReference>
<dbReference type="MIM" id="618850">
    <property type="type" value="phenotype"/>
</dbReference>
<dbReference type="neXtProt" id="NX_O15382"/>
<dbReference type="OpenTargets" id="ENSG00000105552"/>
<dbReference type="PharmGKB" id="PA25289"/>
<dbReference type="VEuPathDB" id="HostDB:ENSG00000105552"/>
<dbReference type="eggNOG" id="KOG0975">
    <property type="taxonomic scope" value="Eukaryota"/>
</dbReference>
<dbReference type="GeneTree" id="ENSGT00390000009532"/>
<dbReference type="InParanoid" id="O15382"/>
<dbReference type="OMA" id="LTEVFAC"/>
<dbReference type="OrthoDB" id="1732691at2759"/>
<dbReference type="PAN-GO" id="O15382">
    <property type="GO annotations" value="4 GO annotations based on evolutionary models"/>
</dbReference>
<dbReference type="PhylomeDB" id="O15382"/>
<dbReference type="TreeFam" id="TF300882"/>
<dbReference type="BRENDA" id="2.6.1.42">
    <property type="organism ID" value="2681"/>
</dbReference>
<dbReference type="PathwayCommons" id="O15382"/>
<dbReference type="Reactome" id="R-HSA-70895">
    <property type="pathway name" value="Branched-chain amino acid catabolism"/>
</dbReference>
<dbReference type="SABIO-RK" id="O15382"/>
<dbReference type="SignaLink" id="O15382"/>
<dbReference type="BioGRID-ORCS" id="587">
    <property type="hits" value="10 hits in 1161 CRISPR screens"/>
</dbReference>
<dbReference type="ChiTaRS" id="BCAT2">
    <property type="organism name" value="human"/>
</dbReference>
<dbReference type="EvolutionaryTrace" id="O15382"/>
<dbReference type="GenomeRNAi" id="587"/>
<dbReference type="Pharos" id="O15382">
    <property type="development level" value="Tchem"/>
</dbReference>
<dbReference type="PRO" id="PR:O15382"/>
<dbReference type="Proteomes" id="UP000005640">
    <property type="component" value="Chromosome 19"/>
</dbReference>
<dbReference type="RNAct" id="O15382">
    <property type="molecule type" value="protein"/>
</dbReference>
<dbReference type="Bgee" id="ENSG00000105552">
    <property type="expression patterns" value="Expressed in right adrenal gland cortex and 188 other cell types or tissues"/>
</dbReference>
<dbReference type="ExpressionAtlas" id="O15382">
    <property type="expression patterns" value="baseline and differential"/>
</dbReference>
<dbReference type="GO" id="GO:0005759">
    <property type="term" value="C:mitochondrial matrix"/>
    <property type="evidence" value="ECO:0000304"/>
    <property type="project" value="Reactome"/>
</dbReference>
<dbReference type="GO" id="GO:0005739">
    <property type="term" value="C:mitochondrion"/>
    <property type="evidence" value="ECO:0000314"/>
    <property type="project" value="HPA"/>
</dbReference>
<dbReference type="GO" id="GO:0005654">
    <property type="term" value="C:nucleoplasm"/>
    <property type="evidence" value="ECO:0000314"/>
    <property type="project" value="HPA"/>
</dbReference>
<dbReference type="GO" id="GO:0004084">
    <property type="term" value="F:branched-chain-amino-acid transaminase activity"/>
    <property type="evidence" value="ECO:0000318"/>
    <property type="project" value="GO_Central"/>
</dbReference>
<dbReference type="GO" id="GO:0052656">
    <property type="term" value="F:L-isoleucine-2-oxoglutarate transaminase activity"/>
    <property type="evidence" value="ECO:0000314"/>
    <property type="project" value="UniProtKB"/>
</dbReference>
<dbReference type="GO" id="GO:0052654">
    <property type="term" value="F:L-leucine-2-oxoglutarate transaminase activity"/>
    <property type="evidence" value="ECO:0000314"/>
    <property type="project" value="UniProtKB"/>
</dbReference>
<dbReference type="GO" id="GO:0052655">
    <property type="term" value="F:L-valine-2-oxoglutarate transaminase activity"/>
    <property type="evidence" value="ECO:0000314"/>
    <property type="project" value="UniProtKB"/>
</dbReference>
<dbReference type="GO" id="GO:0009082">
    <property type="term" value="P:branched-chain amino acid biosynthetic process"/>
    <property type="evidence" value="ECO:0000304"/>
    <property type="project" value="ProtInc"/>
</dbReference>
<dbReference type="GO" id="GO:1990830">
    <property type="term" value="P:cellular response to leukemia inhibitory factor"/>
    <property type="evidence" value="ECO:0007669"/>
    <property type="project" value="Ensembl"/>
</dbReference>
<dbReference type="GO" id="GO:0006550">
    <property type="term" value="P:isoleucine catabolic process"/>
    <property type="evidence" value="ECO:0007669"/>
    <property type="project" value="Ensembl"/>
</dbReference>
<dbReference type="GO" id="GO:0009098">
    <property type="term" value="P:L-leucine biosynthetic process"/>
    <property type="evidence" value="ECO:0000318"/>
    <property type="project" value="GO_Central"/>
</dbReference>
<dbReference type="GO" id="GO:0009099">
    <property type="term" value="P:L-valine biosynthetic process"/>
    <property type="evidence" value="ECO:0000318"/>
    <property type="project" value="GO_Central"/>
</dbReference>
<dbReference type="GO" id="GO:0006629">
    <property type="term" value="P:lipid metabolic process"/>
    <property type="evidence" value="ECO:0007669"/>
    <property type="project" value="UniProtKB-KW"/>
</dbReference>
<dbReference type="GO" id="GO:0010817">
    <property type="term" value="P:regulation of hormone levels"/>
    <property type="evidence" value="ECO:0007669"/>
    <property type="project" value="Ensembl"/>
</dbReference>
<dbReference type="CDD" id="cd01557">
    <property type="entry name" value="BCAT_beta_family"/>
    <property type="match status" value="1"/>
</dbReference>
<dbReference type="FunFam" id="3.30.470.10:FF:000002">
    <property type="entry name" value="Branched-chain-amino-acid aminotransferase"/>
    <property type="match status" value="1"/>
</dbReference>
<dbReference type="FunFam" id="3.20.10.10:FF:000007">
    <property type="entry name" value="Branched-chain-amino-acid aminotransferase, mitochondrial"/>
    <property type="match status" value="1"/>
</dbReference>
<dbReference type="Gene3D" id="3.30.470.10">
    <property type="match status" value="1"/>
</dbReference>
<dbReference type="Gene3D" id="3.20.10.10">
    <property type="entry name" value="D-amino Acid Aminotransferase, subunit A, domain 2"/>
    <property type="match status" value="1"/>
</dbReference>
<dbReference type="InterPro" id="IPR001544">
    <property type="entry name" value="Aminotrans_IV"/>
</dbReference>
<dbReference type="InterPro" id="IPR018300">
    <property type="entry name" value="Aminotrans_IV_CS"/>
</dbReference>
<dbReference type="InterPro" id="IPR036038">
    <property type="entry name" value="Aminotransferase-like"/>
</dbReference>
<dbReference type="InterPro" id="IPR005786">
    <property type="entry name" value="B_amino_transII"/>
</dbReference>
<dbReference type="InterPro" id="IPR043132">
    <property type="entry name" value="BCAT-like_C"/>
</dbReference>
<dbReference type="InterPro" id="IPR043131">
    <property type="entry name" value="BCAT-like_N"/>
</dbReference>
<dbReference type="InterPro" id="IPR033939">
    <property type="entry name" value="BCAT_family"/>
</dbReference>
<dbReference type="NCBIfam" id="TIGR01123">
    <property type="entry name" value="ilvE_II"/>
    <property type="match status" value="1"/>
</dbReference>
<dbReference type="NCBIfam" id="NF009897">
    <property type="entry name" value="PRK13357.1"/>
    <property type="match status" value="1"/>
</dbReference>
<dbReference type="PANTHER" id="PTHR11825:SF39">
    <property type="entry name" value="BRANCHED-CHAIN-AMINO-ACID AMINOTRANSFERASE, MITOCHONDRIAL"/>
    <property type="match status" value="1"/>
</dbReference>
<dbReference type="PANTHER" id="PTHR11825">
    <property type="entry name" value="SUBGROUP IIII AMINOTRANSFERASE"/>
    <property type="match status" value="1"/>
</dbReference>
<dbReference type="Pfam" id="PF01063">
    <property type="entry name" value="Aminotran_4"/>
    <property type="match status" value="1"/>
</dbReference>
<dbReference type="PIRSF" id="PIRSF006468">
    <property type="entry name" value="BCAT1"/>
    <property type="match status" value="1"/>
</dbReference>
<dbReference type="SUPFAM" id="SSF56752">
    <property type="entry name" value="D-aminoacid aminotransferase-like PLP-dependent enzymes"/>
    <property type="match status" value="1"/>
</dbReference>
<dbReference type="PROSITE" id="PS00770">
    <property type="entry name" value="AA_TRANSFER_CLASS_4"/>
    <property type="match status" value="1"/>
</dbReference>
<proteinExistence type="evidence at protein level"/>
<comment type="function">
    <text evidence="1 6 7 8">Catalyzes the first reaction in the catabolism of the essential branched chain amino acids leucine, isoleucine, and valine (PubMed:17050531, PubMed:25653144, PubMed:8702755). May also function as a transporter of branched chain alpha-keto acids (By similarity).</text>
</comment>
<comment type="catalytic activity">
    <reaction evidence="8">
        <text>L-leucine + 2-oxoglutarate = 4-methyl-2-oxopentanoate + L-glutamate</text>
        <dbReference type="Rhea" id="RHEA:18321"/>
        <dbReference type="ChEBI" id="CHEBI:16810"/>
        <dbReference type="ChEBI" id="CHEBI:17865"/>
        <dbReference type="ChEBI" id="CHEBI:29985"/>
        <dbReference type="ChEBI" id="CHEBI:57427"/>
        <dbReference type="EC" id="2.6.1.42"/>
    </reaction>
</comment>
<comment type="catalytic activity">
    <reaction evidence="8">
        <text>L-isoleucine + 2-oxoglutarate = (S)-3-methyl-2-oxopentanoate + L-glutamate</text>
        <dbReference type="Rhea" id="RHEA:24801"/>
        <dbReference type="ChEBI" id="CHEBI:16810"/>
        <dbReference type="ChEBI" id="CHEBI:29985"/>
        <dbReference type="ChEBI" id="CHEBI:35146"/>
        <dbReference type="ChEBI" id="CHEBI:58045"/>
        <dbReference type="EC" id="2.6.1.42"/>
    </reaction>
</comment>
<comment type="catalytic activity">
    <reaction evidence="8">
        <text>L-valine + 2-oxoglutarate = 3-methyl-2-oxobutanoate + L-glutamate</text>
        <dbReference type="Rhea" id="RHEA:24813"/>
        <dbReference type="ChEBI" id="CHEBI:11851"/>
        <dbReference type="ChEBI" id="CHEBI:16810"/>
        <dbReference type="ChEBI" id="CHEBI:29985"/>
        <dbReference type="ChEBI" id="CHEBI:57762"/>
        <dbReference type="EC" id="2.6.1.42"/>
    </reaction>
</comment>
<comment type="cofactor">
    <cofactor evidence="4 5 6">
        <name>pyridoxal 5'-phosphate</name>
        <dbReference type="ChEBI" id="CHEBI:597326"/>
    </cofactor>
</comment>
<comment type="subunit">
    <text evidence="3">Homodimer.</text>
</comment>
<comment type="interaction">
    <interactant intactId="EBI-3926101">
        <id>O15382</id>
    </interactant>
    <interactant intactId="EBI-352528">
        <id>P10809</id>
        <label>HSPD1</label>
    </interactant>
    <organismsDiffer>false</organismsDiffer>
    <experiments>5</experiments>
</comment>
<comment type="subcellular location">
    <subcellularLocation>
        <location evidence="1">Mitochondrion</location>
    </subcellularLocation>
</comment>
<comment type="alternative products">
    <event type="alternative splicing"/>
    <isoform>
        <id>O15382-1</id>
        <name>A</name>
        <sequence type="displayed"/>
    </isoform>
    <isoform>
        <id>O15382-2</id>
        <name>B</name>
        <sequence type="described" ref="VSP_000236"/>
    </isoform>
</comment>
<comment type="tissue specificity">
    <text evidence="2">Ubiquitous.</text>
</comment>
<comment type="disease" evidence="7">
    <disease id="DI-05797">
        <name>Hypervalinemia and hyperleucine-isoleucinemia</name>
        <acronym>HVLI</acronym>
        <description>An autosomal recessive metabolic disorder characterized by highly elevated plasma concentrations of valine and leucine/isoleucine. Affected individuals suffer from headache and mild memory impairment.</description>
        <dbReference type="MIM" id="618850"/>
    </disease>
    <text evidence="7">The disease is caused by variants affecting the gene represented in this entry. A patient with hypervalinemia and hyperleucine-isoleucinemia was identified as compound heterozygote for Gln-170 (inherited from his father) and Lys-264 (inherited from his mother), both variants reduced the catalytic activity of the enzyme. After treatment with vitamin B6, a precursor of pyridoxal 5'-phosphate, a BCAT2 cofactor, the blood levels of branched chain amino acids, especially valine, were decreased and brain lesions were improved.</text>
</comment>
<comment type="similarity">
    <text evidence="13">Belongs to the class-IV pyridoxal-phosphate-dependent aminotransferase family.</text>
</comment>
<comment type="sequence caution" evidence="13">
    <conflict type="erroneous initiation">
        <sequence resource="EMBL-CDS" id="AAB53087"/>
    </conflict>
</comment>
<sequence>MAAAALGQIWARKLLSVPWLLCGPRRYASSSFKAADLQLEMTQKPHKKPGPGEPLVFGKTFTDHMLMVEWNDKGWGQPRIQPFQNLTLHPASSSLHYSLQLFEGMKAFKGKDQQVRLFRPWLNMDRMLRSAMRLCLPSFDKLELLECIRRLIEVDKDWVPDAAGTSLYVRPVLIGNEPSLGVSQPTRALLFVILCPVGAYFPGGSVTPVSLLADPAFIRAWVGGVGNYKLGGNYGPTVLVQQEALKRGCEQVLWLYGPDHQLTEVGTMNIFVYWTHEDGVLELVTPPLNGVILPGVVRQSLLDMAQTWGEFRVVERTITMKQLLRALEEGRVREVFGSGTACQVCPVHRILYKDRNLHIPTMENGPELILRFQKELKEIQYGIRAHEWMFPV</sequence>
<evidence type="ECO:0000250" key="1">
    <source>
        <dbReference type="UniProtKB" id="O35854"/>
    </source>
</evidence>
<evidence type="ECO:0000269" key="2">
    <source>
    </source>
</evidence>
<evidence type="ECO:0000269" key="3">
    <source>
    </source>
</evidence>
<evidence type="ECO:0000269" key="4">
    <source>
    </source>
</evidence>
<evidence type="ECO:0000269" key="5">
    <source>
    </source>
</evidence>
<evidence type="ECO:0000269" key="6">
    <source>
    </source>
</evidence>
<evidence type="ECO:0000269" key="7">
    <source>
    </source>
</evidence>
<evidence type="ECO:0000269" key="8">
    <source>
    </source>
</evidence>
<evidence type="ECO:0000269" key="9">
    <source>
    </source>
</evidence>
<evidence type="ECO:0000303" key="10">
    <source>
    </source>
</evidence>
<evidence type="ECO:0000303" key="11">
    <source>
    </source>
</evidence>
<evidence type="ECO:0000303" key="12">
    <source>
    </source>
</evidence>
<evidence type="ECO:0000305" key="13"/>
<evidence type="ECO:0007744" key="14">
    <source>
        <dbReference type="PDB" id="2A1H"/>
    </source>
</evidence>
<evidence type="ECO:0007744" key="15">
    <source>
        <dbReference type="PDB" id="2HDK"/>
    </source>
</evidence>
<evidence type="ECO:0007744" key="16">
    <source>
        <dbReference type="PDB" id="2HG8"/>
    </source>
</evidence>
<evidence type="ECO:0007744" key="17">
    <source>
        <dbReference type="PDB" id="2HGW"/>
    </source>
</evidence>
<evidence type="ECO:0007744" key="18">
    <source>
        <dbReference type="PDB" id="2HGX"/>
    </source>
</evidence>
<evidence type="ECO:0007744" key="19">
    <source>
        <dbReference type="PDB" id="2HHF"/>
    </source>
</evidence>
<evidence type="ECO:0007744" key="20">
    <source>
    </source>
</evidence>
<evidence type="ECO:0007829" key="21">
    <source>
        <dbReference type="PDB" id="1EKF"/>
    </source>
</evidence>
<evidence type="ECO:0007829" key="22">
    <source>
        <dbReference type="PDB" id="1EKP"/>
    </source>
</evidence>
<evidence type="ECO:0007829" key="23">
    <source>
        <dbReference type="PDB" id="2HG8"/>
    </source>
</evidence>
<evidence type="ECO:0007829" key="24">
    <source>
        <dbReference type="PDB" id="5BWX"/>
    </source>
</evidence>
<evidence type="ECO:0007829" key="25">
    <source>
        <dbReference type="PDB" id="5CR5"/>
    </source>
</evidence>
<evidence type="ECO:0007829" key="26">
    <source>
        <dbReference type="PDB" id="5MPR"/>
    </source>
</evidence>
<organism>
    <name type="scientific">Homo sapiens</name>
    <name type="common">Human</name>
    <dbReference type="NCBI Taxonomy" id="9606"/>
    <lineage>
        <taxon>Eukaryota</taxon>
        <taxon>Metazoa</taxon>
        <taxon>Chordata</taxon>
        <taxon>Craniata</taxon>
        <taxon>Vertebrata</taxon>
        <taxon>Euteleostomi</taxon>
        <taxon>Mammalia</taxon>
        <taxon>Eutheria</taxon>
        <taxon>Euarchontoglires</taxon>
        <taxon>Primates</taxon>
        <taxon>Haplorrhini</taxon>
        <taxon>Catarrhini</taxon>
        <taxon>Hominidae</taxon>
        <taxon>Homo</taxon>
    </lineage>
</organism>
<feature type="transit peptide" description="Mitochondrion" evidence="1">
    <location>
        <begin position="1"/>
        <end position="27"/>
    </location>
</feature>
<feature type="chain" id="PRO_0000001271" description="Branched-chain-amino-acid aminotransferase, mitochondrial">
    <location>
        <begin position="28"/>
        <end position="392"/>
    </location>
</feature>
<feature type="binding site" evidence="4 5 6">
    <location>
        <position position="168"/>
    </location>
    <ligand>
        <name>substrate</name>
    </ligand>
</feature>
<feature type="modified residue" description="N6-(pyridoxal phosphate)lysine" evidence="5 6 14 15 16 17 18 19">
    <location>
        <position position="229"/>
    </location>
</feature>
<feature type="modified residue" description="N6-acetyllysine" evidence="20">
    <location>
        <position position="321"/>
    </location>
</feature>
<feature type="splice variant" id="VSP_000236" description="In isoform B." evidence="10">
    <location>
        <begin position="9"/>
        <end position="100"/>
    </location>
</feature>
<feature type="sequence variant" id="VAR_084533" description="In HVLI; reduced catalytic activity; dbSNP:rs749866079." evidence="7">
    <original>R</original>
    <variation>Q</variation>
    <location>
        <position position="170"/>
    </location>
</feature>
<feature type="sequence variant" id="VAR_048234" description="In dbSNP:rs11548193." evidence="8 9">
    <original>T</original>
    <variation>R</variation>
    <location>
        <position position="186"/>
    </location>
</feature>
<feature type="sequence variant" id="VAR_084534" description="In HVLI; reduced catalytic activity; dbSNP:rs767653663." evidence="7">
    <original>E</original>
    <variation>K</variation>
    <location>
        <position position="264"/>
    </location>
</feature>
<feature type="mutagenesis site" description="Reduces activity about 6-fold." evidence="6">
    <original>C</original>
    <variation>A</variation>
    <location>
        <position position="342"/>
    </location>
</feature>
<feature type="mutagenesis site" description="Slight reduction of activity." evidence="6">
    <original>C</original>
    <variation>A</variation>
    <location>
        <position position="345"/>
    </location>
</feature>
<feature type="sequence conflict" description="In Ref. 6; AAB53087." evidence="13" ref="6">
    <original>V</original>
    <variation>L</variation>
    <location>
        <position position="154"/>
    </location>
</feature>
<feature type="sequence conflict" description="In Ref. 6; AAB53087." evidence="13" ref="6">
    <original>T</original>
    <variation>N</variation>
    <location>
        <position position="207"/>
    </location>
</feature>
<feature type="sequence conflict" description="In Ref. 6; AAB53087." evidence="13" ref="6">
    <original>DPA</original>
    <variation>EPT</variation>
    <location>
        <begin position="214"/>
        <end position="216"/>
    </location>
</feature>
<feature type="sequence conflict" description="In Ref. 6; AAB53087." evidence="13" ref="6">
    <original>L</original>
    <variation>F</variation>
    <location>
        <position position="253"/>
    </location>
</feature>
<feature type="sequence conflict" description="In Ref. 6; AAB53087." evidence="13" ref="6">
    <original>A</original>
    <variation>P</variation>
    <location>
        <position position="326"/>
    </location>
</feature>
<feature type="sequence conflict" description="In Ref. 6; AAB53087." evidence="13" ref="6">
    <original>G</original>
    <variation>A</variation>
    <location>
        <position position="330"/>
    </location>
</feature>
<feature type="sequence conflict" description="In Ref. 6; AAB53087." evidence="13" ref="6">
    <original>R</original>
    <variation>G</variation>
    <location>
        <position position="349"/>
    </location>
</feature>
<feature type="sequence conflict" description="In Ref. 6; AAB53087." evidence="13" ref="6">
    <original>L</original>
    <variation>F</variation>
    <location>
        <position position="357"/>
    </location>
</feature>
<feature type="sequence conflict" description="In Ref. 6; AAB53087." evidence="13" ref="6">
    <original>L</original>
    <variation>F</variation>
    <location>
        <position position="370"/>
    </location>
</feature>
<feature type="helix" evidence="26">
    <location>
        <begin position="34"/>
        <end position="36"/>
    </location>
</feature>
<feature type="strand" evidence="23">
    <location>
        <begin position="51"/>
        <end position="53"/>
    </location>
</feature>
<feature type="turn" evidence="26">
    <location>
        <begin position="57"/>
        <end position="59"/>
    </location>
</feature>
<feature type="strand" evidence="26">
    <location>
        <begin position="63"/>
        <end position="71"/>
    </location>
</feature>
<feature type="strand" evidence="21">
    <location>
        <begin position="72"/>
        <end position="75"/>
    </location>
</feature>
<feature type="strand" evidence="26">
    <location>
        <begin position="79"/>
        <end position="83"/>
    </location>
</feature>
<feature type="strand" evidence="25">
    <location>
        <begin position="86"/>
        <end position="88"/>
    </location>
</feature>
<feature type="helix" evidence="26">
    <location>
        <begin position="93"/>
        <end position="96"/>
    </location>
</feature>
<feature type="strand" evidence="26">
    <location>
        <begin position="100"/>
        <end position="102"/>
    </location>
</feature>
<feature type="strand" evidence="26">
    <location>
        <begin position="105"/>
        <end position="109"/>
    </location>
</feature>
<feature type="strand" evidence="26">
    <location>
        <begin position="115"/>
        <end position="119"/>
    </location>
</feature>
<feature type="helix" evidence="26">
    <location>
        <begin position="120"/>
        <end position="133"/>
    </location>
</feature>
<feature type="helix" evidence="26">
    <location>
        <begin position="141"/>
        <end position="154"/>
    </location>
</feature>
<feature type="helix" evidence="26">
    <location>
        <begin position="156"/>
        <end position="158"/>
    </location>
</feature>
<feature type="strand" evidence="22">
    <location>
        <begin position="162"/>
        <end position="164"/>
    </location>
</feature>
<feature type="strand" evidence="26">
    <location>
        <begin position="166"/>
        <end position="175"/>
    </location>
</feature>
<feature type="strand" evidence="23">
    <location>
        <begin position="181"/>
        <end position="183"/>
    </location>
</feature>
<feature type="strand" evidence="26">
    <location>
        <begin position="188"/>
        <end position="197"/>
    </location>
</feature>
<feature type="helix" evidence="24">
    <location>
        <begin position="202"/>
        <end position="204"/>
    </location>
</feature>
<feature type="strand" evidence="26">
    <location>
        <begin position="209"/>
        <end position="213"/>
    </location>
</feature>
<feature type="helix" evidence="26">
    <location>
        <begin position="231"/>
        <end position="233"/>
    </location>
</feature>
<feature type="helix" evidence="26">
    <location>
        <begin position="235"/>
        <end position="237"/>
    </location>
</feature>
<feature type="helix" evidence="26">
    <location>
        <begin position="238"/>
        <end position="246"/>
    </location>
</feature>
<feature type="strand" evidence="26">
    <location>
        <begin position="250"/>
        <end position="256"/>
    </location>
</feature>
<feature type="turn" evidence="26">
    <location>
        <begin position="257"/>
        <end position="260"/>
    </location>
</feature>
<feature type="strand" evidence="26">
    <location>
        <begin position="261"/>
        <end position="265"/>
    </location>
</feature>
<feature type="strand" evidence="26">
    <location>
        <begin position="268"/>
        <end position="275"/>
    </location>
</feature>
<feature type="strand" evidence="26">
    <location>
        <begin position="281"/>
        <end position="285"/>
    </location>
</feature>
<feature type="strand" evidence="26">
    <location>
        <begin position="289"/>
        <end position="292"/>
    </location>
</feature>
<feature type="helix" evidence="26">
    <location>
        <begin position="296"/>
        <end position="308"/>
    </location>
</feature>
<feature type="strand" evidence="26">
    <location>
        <begin position="310"/>
        <end position="315"/>
    </location>
</feature>
<feature type="helix" evidence="26">
    <location>
        <begin position="320"/>
        <end position="328"/>
    </location>
</feature>
<feature type="strand" evidence="26">
    <location>
        <begin position="332"/>
        <end position="339"/>
    </location>
</feature>
<feature type="turn" evidence="26">
    <location>
        <begin position="340"/>
        <end position="342"/>
    </location>
</feature>
<feature type="strand" evidence="26">
    <location>
        <begin position="343"/>
        <end position="352"/>
    </location>
</feature>
<feature type="strand" evidence="26">
    <location>
        <begin position="355"/>
        <end position="358"/>
    </location>
</feature>
<feature type="helix" evidence="26">
    <location>
        <begin position="361"/>
        <end position="364"/>
    </location>
</feature>
<feature type="helix" evidence="26">
    <location>
        <begin position="367"/>
        <end position="380"/>
    </location>
</feature>
<feature type="strand" evidence="26">
    <location>
        <begin position="389"/>
        <end position="391"/>
    </location>
</feature>
<keyword id="KW-0002">3D-structure</keyword>
<keyword id="KW-0007">Acetylation</keyword>
<keyword id="KW-0025">Alternative splicing</keyword>
<keyword id="KW-0028">Amino-acid biosynthesis</keyword>
<keyword id="KW-0032">Aminotransferase</keyword>
<keyword id="KW-0100">Branched-chain amino acid biosynthesis</keyword>
<keyword id="KW-0225">Disease variant</keyword>
<keyword id="KW-0443">Lipid metabolism</keyword>
<keyword id="KW-0496">Mitochondrion</keyword>
<keyword id="KW-1267">Proteomics identification</keyword>
<keyword id="KW-0663">Pyridoxal phosphate</keyword>
<keyword id="KW-1185">Reference proteome</keyword>
<keyword id="KW-0808">Transferase</keyword>
<keyword id="KW-0809">Transit peptide</keyword>
<gene>
    <name type="primary">BCAT2</name>
    <name evidence="12" type="synonym">BCATM</name>
    <name type="synonym">BCT2</name>
    <name evidence="11" type="synonym">ECA40</name>
</gene>
<accession>O15382</accession>
<accession>B2RB87</accession>
<accession>O00269</accession>
<accession>Q96KG1</accession>
<accession>Q9BTB6</accession>
<accession>Q9BUU6</accession>
<reference key="1">
    <citation type="journal article" date="1997" name="Biochim. Biophys. Acta">
        <title>Cloning of the rat and human mitochondrial branched chain aminotransferases (BCATm).</title>
        <authorList>
            <person name="Bledsoe R.K."/>
            <person name="Dawson P.A."/>
            <person name="Hutson S.M."/>
        </authorList>
    </citation>
    <scope>NUCLEOTIDE SEQUENCE [MRNA] (ISOFORM A)</scope>
    <scope>VARIANT ARG-186</scope>
</reference>
<reference key="2">
    <citation type="journal article" date="2001" name="Placenta">
        <title>Molecular cloning and characterization of placental tissue protein 18 (PP18a)/human mitochondrial branched-chain aminotransferase (BCATm) and its novel alternatively spliced PP18b variant.</title>
        <authorList>
            <person name="Than N.G."/>
            <person name="Sumegi B."/>
            <person name="Than G.N."/>
            <person name="Bellyei S."/>
            <person name="Bohn H."/>
        </authorList>
    </citation>
    <scope>NUCLEOTIDE SEQUENCE [MRNA] (ISOFORMS A AND B)</scope>
    <scope>TISSUE SPECIFICITY</scope>
    <source>
        <tissue>Placenta</tissue>
    </source>
</reference>
<reference key="3">
    <citation type="journal article" date="2004" name="Nat. Genet.">
        <title>Complete sequencing and characterization of 21,243 full-length human cDNAs.</title>
        <authorList>
            <person name="Ota T."/>
            <person name="Suzuki Y."/>
            <person name="Nishikawa T."/>
            <person name="Otsuki T."/>
            <person name="Sugiyama T."/>
            <person name="Irie R."/>
            <person name="Wakamatsu A."/>
            <person name="Hayashi K."/>
            <person name="Sato H."/>
            <person name="Nagai K."/>
            <person name="Kimura K."/>
            <person name="Makita H."/>
            <person name="Sekine M."/>
            <person name="Obayashi M."/>
            <person name="Nishi T."/>
            <person name="Shibahara T."/>
            <person name="Tanaka T."/>
            <person name="Ishii S."/>
            <person name="Yamamoto J."/>
            <person name="Saito K."/>
            <person name="Kawai Y."/>
            <person name="Isono Y."/>
            <person name="Nakamura Y."/>
            <person name="Nagahari K."/>
            <person name="Murakami K."/>
            <person name="Yasuda T."/>
            <person name="Iwayanagi T."/>
            <person name="Wagatsuma M."/>
            <person name="Shiratori A."/>
            <person name="Sudo H."/>
            <person name="Hosoiri T."/>
            <person name="Kaku Y."/>
            <person name="Kodaira H."/>
            <person name="Kondo H."/>
            <person name="Sugawara M."/>
            <person name="Takahashi M."/>
            <person name="Kanda K."/>
            <person name="Yokoi T."/>
            <person name="Furuya T."/>
            <person name="Kikkawa E."/>
            <person name="Omura Y."/>
            <person name="Abe K."/>
            <person name="Kamihara K."/>
            <person name="Katsuta N."/>
            <person name="Sato K."/>
            <person name="Tanikawa M."/>
            <person name="Yamazaki M."/>
            <person name="Ninomiya K."/>
            <person name="Ishibashi T."/>
            <person name="Yamashita H."/>
            <person name="Murakawa K."/>
            <person name="Fujimori K."/>
            <person name="Tanai H."/>
            <person name="Kimata M."/>
            <person name="Watanabe M."/>
            <person name="Hiraoka S."/>
            <person name="Chiba Y."/>
            <person name="Ishida S."/>
            <person name="Ono Y."/>
            <person name="Takiguchi S."/>
            <person name="Watanabe S."/>
            <person name="Yosida M."/>
            <person name="Hotuta T."/>
            <person name="Kusano J."/>
            <person name="Kanehori K."/>
            <person name="Takahashi-Fujii A."/>
            <person name="Hara H."/>
            <person name="Tanase T.-O."/>
            <person name="Nomura Y."/>
            <person name="Togiya S."/>
            <person name="Komai F."/>
            <person name="Hara R."/>
            <person name="Takeuchi K."/>
            <person name="Arita M."/>
            <person name="Imose N."/>
            <person name="Musashino K."/>
            <person name="Yuuki H."/>
            <person name="Oshima A."/>
            <person name="Sasaki N."/>
            <person name="Aotsuka S."/>
            <person name="Yoshikawa Y."/>
            <person name="Matsunawa H."/>
            <person name="Ichihara T."/>
            <person name="Shiohata N."/>
            <person name="Sano S."/>
            <person name="Moriya S."/>
            <person name="Momiyama H."/>
            <person name="Satoh N."/>
            <person name="Takami S."/>
            <person name="Terashima Y."/>
            <person name="Suzuki O."/>
            <person name="Nakagawa S."/>
            <person name="Senoh A."/>
            <person name="Mizoguchi H."/>
            <person name="Goto Y."/>
            <person name="Shimizu F."/>
            <person name="Wakebe H."/>
            <person name="Hishigaki H."/>
            <person name="Watanabe T."/>
            <person name="Sugiyama A."/>
            <person name="Takemoto M."/>
            <person name="Kawakami B."/>
            <person name="Yamazaki M."/>
            <person name="Watanabe K."/>
            <person name="Kumagai A."/>
            <person name="Itakura S."/>
            <person name="Fukuzumi Y."/>
            <person name="Fujimori Y."/>
            <person name="Komiyama M."/>
            <person name="Tashiro H."/>
            <person name="Tanigami A."/>
            <person name="Fujiwara T."/>
            <person name="Ono T."/>
            <person name="Yamada K."/>
            <person name="Fujii Y."/>
            <person name="Ozaki K."/>
            <person name="Hirao M."/>
            <person name="Ohmori Y."/>
            <person name="Kawabata A."/>
            <person name="Hikiji T."/>
            <person name="Kobatake N."/>
            <person name="Inagaki H."/>
            <person name="Ikema Y."/>
            <person name="Okamoto S."/>
            <person name="Okitani R."/>
            <person name="Kawakami T."/>
            <person name="Noguchi S."/>
            <person name="Itoh T."/>
            <person name="Shigeta K."/>
            <person name="Senba T."/>
            <person name="Matsumura K."/>
            <person name="Nakajima Y."/>
            <person name="Mizuno T."/>
            <person name="Morinaga M."/>
            <person name="Sasaki M."/>
            <person name="Togashi T."/>
            <person name="Oyama M."/>
            <person name="Hata H."/>
            <person name="Watanabe M."/>
            <person name="Komatsu T."/>
            <person name="Mizushima-Sugano J."/>
            <person name="Satoh T."/>
            <person name="Shirai Y."/>
            <person name="Takahashi Y."/>
            <person name="Nakagawa K."/>
            <person name="Okumura K."/>
            <person name="Nagase T."/>
            <person name="Nomura N."/>
            <person name="Kikuchi H."/>
            <person name="Masuho Y."/>
            <person name="Yamashita R."/>
            <person name="Nakai K."/>
            <person name="Yada T."/>
            <person name="Nakamura Y."/>
            <person name="Ohara O."/>
            <person name="Isogai T."/>
            <person name="Sugano S."/>
        </authorList>
    </citation>
    <scope>NUCLEOTIDE SEQUENCE [LARGE SCALE MRNA] (ISOFORM A)</scope>
    <source>
        <tissue>Heart</tissue>
    </source>
</reference>
<reference key="4">
    <citation type="submission" date="2005-07" db="EMBL/GenBank/DDBJ databases">
        <authorList>
            <person name="Mural R.J."/>
            <person name="Istrail S."/>
            <person name="Sutton G.G."/>
            <person name="Florea L."/>
            <person name="Halpern A.L."/>
            <person name="Mobarry C.M."/>
            <person name="Lippert R."/>
            <person name="Walenz B."/>
            <person name="Shatkay H."/>
            <person name="Dew I."/>
            <person name="Miller J.R."/>
            <person name="Flanigan M.J."/>
            <person name="Edwards N.J."/>
            <person name="Bolanos R."/>
            <person name="Fasulo D."/>
            <person name="Halldorsson B.V."/>
            <person name="Hannenhalli S."/>
            <person name="Turner R."/>
            <person name="Yooseph S."/>
            <person name="Lu F."/>
            <person name="Nusskern D.R."/>
            <person name="Shue B.C."/>
            <person name="Zheng X.H."/>
            <person name="Zhong F."/>
            <person name="Delcher A.L."/>
            <person name="Huson D.H."/>
            <person name="Kravitz S.A."/>
            <person name="Mouchard L."/>
            <person name="Reinert K."/>
            <person name="Remington K.A."/>
            <person name="Clark A.G."/>
            <person name="Waterman M.S."/>
            <person name="Eichler E.E."/>
            <person name="Adams M.D."/>
            <person name="Hunkapiller M.W."/>
            <person name="Myers E.W."/>
            <person name="Venter J.C."/>
        </authorList>
    </citation>
    <scope>NUCLEOTIDE SEQUENCE [LARGE SCALE GENOMIC DNA]</scope>
</reference>
<reference key="5">
    <citation type="journal article" date="2004" name="Genome Res.">
        <title>The status, quality, and expansion of the NIH full-length cDNA project: the Mammalian Gene Collection (MGC).</title>
        <authorList>
            <consortium name="The MGC Project Team"/>
        </authorList>
    </citation>
    <scope>NUCLEOTIDE SEQUENCE [LARGE SCALE MRNA] (ISOFORM A)</scope>
    <source>
        <tissue>Lung</tissue>
        <tissue>Skin</tissue>
    </source>
</reference>
<reference key="6">
    <citation type="journal article" date="1996" name="J. Biol. Chem.">
        <title>Two yeast homologs of ECA39, a target for c-Myc regulation, code for cytosolic and mitochondrial branched-chain amino acid aminotransferases.</title>
        <authorList>
            <person name="Eden A."/>
            <person name="Simchen G."/>
            <person name="Benvenisty N."/>
        </authorList>
    </citation>
    <scope>NUCLEOTIDE SEQUENCE [MRNA] OF 27-392 (ISOFORM A)</scope>
    <scope>FUNCTION</scope>
    <scope>CATALYTIC ACTIVITY</scope>
    <scope>VARIANT ARG-186</scope>
    <source>
        <tissue>Brain</tissue>
    </source>
</reference>
<reference key="7">
    <citation type="journal article" date="2009" name="Science">
        <title>Lysine acetylation targets protein complexes and co-regulates major cellular functions.</title>
        <authorList>
            <person name="Choudhary C."/>
            <person name="Kumar C."/>
            <person name="Gnad F."/>
            <person name="Nielsen M.L."/>
            <person name="Rehman M."/>
            <person name="Walther T.C."/>
            <person name="Olsen J.V."/>
            <person name="Mann M."/>
        </authorList>
    </citation>
    <scope>ACETYLATION [LARGE SCALE ANALYSIS] AT LYS-321</scope>
    <scope>IDENTIFICATION BY MASS SPECTROMETRY [LARGE SCALE ANALYSIS]</scope>
</reference>
<reference key="8">
    <citation type="journal article" date="2011" name="BMC Syst. Biol.">
        <title>Initial characterization of the human central proteome.</title>
        <authorList>
            <person name="Burkard T.R."/>
            <person name="Planyavsky M."/>
            <person name="Kaupe I."/>
            <person name="Breitwieser F.P."/>
            <person name="Buerckstuemmer T."/>
            <person name="Bennett K.L."/>
            <person name="Superti-Furga G."/>
            <person name="Colinge J."/>
        </authorList>
    </citation>
    <scope>IDENTIFICATION BY MASS SPECTROMETRY [LARGE SCALE ANALYSIS]</scope>
</reference>
<reference key="9">
    <citation type="journal article" date="2015" name="J. Inherit. Metab. Dis.">
        <title>Hypervalinemia and hyperleucine-isoleucinemia caused by mutations in the branched-chain-amino-acid aminotransferase gene.</title>
        <authorList>
            <person name="Wang X.L."/>
            <person name="Li C.J."/>
            <person name="Xing Y."/>
            <person name="Yang Y.H."/>
            <person name="Jia J.P."/>
        </authorList>
    </citation>
    <scope>INVOLVEMENT IN HVLI</scope>
    <scope>VARIANTS HVLI GLN-170 AND LYS-264</scope>
    <scope>FUNCTION</scope>
</reference>
<reference key="10">
    <citation type="journal article" date="2015" name="Proteomics">
        <title>N-terminome analysis of the human mitochondrial proteome.</title>
        <authorList>
            <person name="Vaca Jacome A.S."/>
            <person name="Rabilloud T."/>
            <person name="Schaeffer-Reiss C."/>
            <person name="Rompais M."/>
            <person name="Ayoub D."/>
            <person name="Lane L."/>
            <person name="Bairoch A."/>
            <person name="Van Dorsselaer A."/>
            <person name="Carapito C."/>
        </authorList>
    </citation>
    <scope>IDENTIFICATION BY MASS SPECTROMETRY [LARGE SCALE ANALYSIS]</scope>
</reference>
<reference key="11">
    <citation type="journal article" date="2001" name="Acta Crystallogr. D">
        <title>The structure of human mitochondrial branched-chain aminotransferase.</title>
        <authorList>
            <person name="Yennawar N.H."/>
            <person name="Dunbar J."/>
            <person name="Conway M.E."/>
            <person name="Hutson S.M."/>
            <person name="Farber G.K."/>
        </authorList>
    </citation>
    <scope>X-RAY CRYSTALLOGRAPHY (1.95 ANGSTROMS) OF 28-392 IN COMPLEX WITH COFACTOR</scope>
    <scope>SUBUNIT</scope>
</reference>
<reference key="12">
    <citation type="journal article" date="2002" name="Biochemistry">
        <title>Crystal structures of human mitochondrial branched chain aminotransferase reaction intermediates: ketimine and pyridoxamine phosphate forms.</title>
        <authorList>
            <person name="Yennawar N.H."/>
            <person name="Conway M.E."/>
            <person name="Yennawar H.P."/>
            <person name="Farber G.K."/>
            <person name="Hutson S.M."/>
        </authorList>
    </citation>
    <scope>X-RAY CRYSTALLOGRAPHY (1.9 ANGSTROMS) OF 28-392 IN COMPLEXES WITH COFACTOR AND SUBSTRATES</scope>
</reference>
<reference key="13">
    <citation type="journal article" date="2005" name="J. Biol. Chem.">
        <title>Structural determinants for branched-chain aminotransferase isozyme-specific inhibition by the anticonvulsant drug gabapentin.</title>
        <authorList>
            <person name="Goto M."/>
            <person name="Miyahara I."/>
            <person name="Hirotsu K."/>
            <person name="Conway M."/>
            <person name="Yennawar N."/>
            <person name="Islam M.M."/>
            <person name="Hutson S.M."/>
        </authorList>
    </citation>
    <scope>X-RAY CRYSTALLOGRAPHY (1.8 ANGSTROMS) OF 28-392 IN COMPLEXES WITH COFACTOR AND SUBSTRATE ANALOGS</scope>
</reference>
<reference evidence="15 16 17 18 19" key="14">
    <citation type="journal article" date="2006" name="J. Biol. Chem.">
        <title>Human mitochondrial branched chain aminotransferase isozyme: structural role of the CXXC center in catalysis.</title>
        <authorList>
            <person name="Yennawar N.H."/>
            <person name="Islam M.M."/>
            <person name="Conway M."/>
            <person name="Wallin R."/>
            <person name="Hutson S.M."/>
        </authorList>
    </citation>
    <scope>X-RAY CRYSTALLOGRAPHY (1.8 ANGSTROMS) OF 28-392 IN COMPLEXES WITH COFACTOR AND SUBSTRATE ANALOGS</scope>
    <scope>FUNCTION</scope>
    <scope>MUTAGENESIS OF CYS-342 AND CYS-345</scope>
</reference>
<name>BCAT2_HUMAN</name>